<comment type="function">
    <text evidence="2 4">Plays a role in fertilization by controlling binding of sperm to zona pellucida and migration of spermatozoa into the oviduct (By similarity). May play a role in signal transduction and promote protein tyrosine phosphorylation (PubMed:11809740).</text>
</comment>
<comment type="subunit">
    <text evidence="2">Interacts with VAMP3. Interacts with LY6K. Interacts with DPEP3; co-localized on the cell surface of spermatocytes, spermatids, and testicular spermatozoa, co-localized only in cytoplasmic droplets of caput and corpus epididymal sperm. Interacts with ADAM5.</text>
</comment>
<comment type="subcellular location">
    <subcellularLocation>
        <location evidence="4">Cell membrane</location>
        <topology evidence="4">Lipid-anchor</topology>
        <topology evidence="4">GPI-anchor</topology>
    </subcellularLocation>
    <subcellularLocation>
        <location evidence="4">Membrane raft</location>
    </subcellularLocation>
    <subcellularLocation>
        <location evidence="2">Cytoplasmic vesicle</location>
        <location evidence="2">Secretory vesicle</location>
        <location evidence="2">Acrosome</location>
    </subcellularLocation>
    <subcellularLocation>
        <location evidence="2">Secreted</location>
    </subcellularLocation>
    <subcellularLocation>
        <location evidence="2">Cytoplasmic vesicle</location>
    </subcellularLocation>
    <text evidence="2">Located on plasma membrane of spermatocytes, round and elongated spermatids, and testicular spermatozoa.</text>
</comment>
<comment type="tissue specificity">
    <text evidence="4">Detected in testis.</text>
</comment>
<comment type="PTM">
    <text evidence="4">N-glycosylated; by high mannose and/or biantennary complex and/or certain types of hybrid oligosaccharides; possesses different oligosaccharides chains according to its subcellular localization in the testis.</text>
</comment>
<comment type="PTM">
    <text evidence="2">Sheds from membrane raft by ACE and released from the cell surface of epididymal sperm while it passes through the caput epididymis leading to disappearance of TEX101 on spermatozoa; is essential to produce fertile spermatozoa.</text>
</comment>
<organism>
    <name type="scientific">Rattus norvegicus</name>
    <name type="common">Rat</name>
    <dbReference type="NCBI Taxonomy" id="10116"/>
    <lineage>
        <taxon>Eukaryota</taxon>
        <taxon>Metazoa</taxon>
        <taxon>Chordata</taxon>
        <taxon>Craniata</taxon>
        <taxon>Vertebrata</taxon>
        <taxon>Euteleostomi</taxon>
        <taxon>Mammalia</taxon>
        <taxon>Eutheria</taxon>
        <taxon>Euarchontoglires</taxon>
        <taxon>Glires</taxon>
        <taxon>Rodentia</taxon>
        <taxon>Myomorpha</taxon>
        <taxon>Muroidea</taxon>
        <taxon>Muridae</taxon>
        <taxon>Murinae</taxon>
        <taxon>Rattus</taxon>
    </lineage>
</organism>
<dbReference type="EMBL" id="AF347056">
    <property type="protein sequence ID" value="AAK58911.1"/>
    <property type="molecule type" value="mRNA"/>
</dbReference>
<dbReference type="RefSeq" id="NP_620606.1">
    <property type="nucleotide sequence ID" value="NM_139037.1"/>
</dbReference>
<dbReference type="SMR" id="Q924B5"/>
<dbReference type="FunCoup" id="Q924B5">
    <property type="interactions" value="38"/>
</dbReference>
<dbReference type="STRING" id="10116.ENSRNOP00000027202"/>
<dbReference type="GlyCosmos" id="Q924B5">
    <property type="glycosylation" value="4 sites, No reported glycans"/>
</dbReference>
<dbReference type="GlyGen" id="Q924B5">
    <property type="glycosylation" value="4 sites"/>
</dbReference>
<dbReference type="PhosphoSitePlus" id="Q924B5"/>
<dbReference type="PaxDb" id="10116-ENSRNOP00000027202"/>
<dbReference type="GeneID" id="207113"/>
<dbReference type="KEGG" id="rno:207113"/>
<dbReference type="UCSC" id="RGD:621373">
    <property type="organism name" value="rat"/>
</dbReference>
<dbReference type="AGR" id="RGD:621373"/>
<dbReference type="CTD" id="83639"/>
<dbReference type="RGD" id="621373">
    <property type="gene designation" value="Tex101"/>
</dbReference>
<dbReference type="eggNOG" id="ENOG502T90B">
    <property type="taxonomic scope" value="Eukaryota"/>
</dbReference>
<dbReference type="InParanoid" id="Q924B5"/>
<dbReference type="PhylomeDB" id="Q924B5"/>
<dbReference type="Reactome" id="R-RNO-163125">
    <property type="pathway name" value="Post-translational modification: synthesis of GPI-anchored proteins"/>
</dbReference>
<dbReference type="PRO" id="PR:Q924B5"/>
<dbReference type="Proteomes" id="UP000002494">
    <property type="component" value="Unplaced"/>
</dbReference>
<dbReference type="GO" id="GO:0002080">
    <property type="term" value="C:acrosomal membrane"/>
    <property type="evidence" value="ECO:0000266"/>
    <property type="project" value="RGD"/>
</dbReference>
<dbReference type="GO" id="GO:0001669">
    <property type="term" value="C:acrosomal vesicle"/>
    <property type="evidence" value="ECO:0000250"/>
    <property type="project" value="UniProtKB"/>
</dbReference>
<dbReference type="GO" id="GO:0009986">
    <property type="term" value="C:cell surface"/>
    <property type="evidence" value="ECO:0000314"/>
    <property type="project" value="RGD"/>
</dbReference>
<dbReference type="GO" id="GO:0005576">
    <property type="term" value="C:extracellular region"/>
    <property type="evidence" value="ECO:0000250"/>
    <property type="project" value="UniProtKB"/>
</dbReference>
<dbReference type="GO" id="GO:0005886">
    <property type="term" value="C:plasma membrane"/>
    <property type="evidence" value="ECO:0000250"/>
    <property type="project" value="UniProtKB"/>
</dbReference>
<dbReference type="GO" id="GO:0044853">
    <property type="term" value="C:plasma membrane raft"/>
    <property type="evidence" value="ECO:0000318"/>
    <property type="project" value="GO_Central"/>
</dbReference>
<dbReference type="GO" id="GO:0098552">
    <property type="term" value="C:side of membrane"/>
    <property type="evidence" value="ECO:0007669"/>
    <property type="project" value="UniProtKB-KW"/>
</dbReference>
<dbReference type="GO" id="GO:0045575">
    <property type="term" value="P:basophil activation"/>
    <property type="evidence" value="ECO:0000314"/>
    <property type="project" value="RGD"/>
</dbReference>
<dbReference type="GO" id="GO:0007339">
    <property type="term" value="P:binding of sperm to zona pellucida"/>
    <property type="evidence" value="ECO:0000250"/>
    <property type="project" value="UniProtKB"/>
</dbReference>
<dbReference type="GO" id="GO:0009566">
    <property type="term" value="P:fertilization"/>
    <property type="evidence" value="ECO:0000250"/>
    <property type="project" value="UniProtKB"/>
</dbReference>
<dbReference type="GO" id="GO:0030317">
    <property type="term" value="P:flagellated sperm motility"/>
    <property type="evidence" value="ECO:0000250"/>
    <property type="project" value="UniProtKB"/>
</dbReference>
<dbReference type="GO" id="GO:0051480">
    <property type="term" value="P:regulation of cytosolic calcium ion concentration"/>
    <property type="evidence" value="ECO:0000314"/>
    <property type="project" value="RGD"/>
</dbReference>
<dbReference type="GO" id="GO:1901317">
    <property type="term" value="P:regulation of flagellated sperm motility"/>
    <property type="evidence" value="ECO:0000250"/>
    <property type="project" value="UniProtKB"/>
</dbReference>
<dbReference type="CDD" id="cd23622">
    <property type="entry name" value="TFP_LU_ECD_TEX101_rpt1"/>
    <property type="match status" value="1"/>
</dbReference>
<dbReference type="CDD" id="cd23634">
    <property type="entry name" value="TFP_LU_ECD_TEX101_rpt2"/>
    <property type="match status" value="1"/>
</dbReference>
<dbReference type="InterPro" id="IPR051899">
    <property type="entry name" value="Fert-Immune_med_protein"/>
</dbReference>
<dbReference type="InterPro" id="IPR016054">
    <property type="entry name" value="LY6_UPA_recep-like"/>
</dbReference>
<dbReference type="PANTHER" id="PTHR16529">
    <property type="entry name" value="CD177 ANTIGEN"/>
    <property type="match status" value="1"/>
</dbReference>
<dbReference type="PANTHER" id="PTHR16529:SF8">
    <property type="entry name" value="CD177 ANTIGEN"/>
    <property type="match status" value="1"/>
</dbReference>
<dbReference type="Pfam" id="PF00021">
    <property type="entry name" value="UPAR_LY6"/>
    <property type="match status" value="2"/>
</dbReference>
<sequence length="250" mass="27004">MGACRIQYILLVFLLIASHWTLVQNIYCEVSRTLSLEDNPSGTFNWTSKAEKCNPGEFCQETVLLIKAEGTKTAILASKSCVPQGAETMTFVQYTAPPGLVAISYSNYCNDSLCNNRNNLASILQAPEPTATSNMSGARHCPTCLALEPCSSAPSMPCANGTTQCYHGKIELSGGGMDSVVHVKGCTTAIGCRLMAKMESVGPMTVKETCSYQSFLHPRMAEIGASWMPTSLWVLELLLPALSLPLIYFP</sequence>
<accession>Q924B5</accession>
<reference key="1">
    <citation type="journal article" date="2002" name="Int. Immunol.">
        <title>A novel lipid raft-associated glycoprotein, TEC-21, activates rat basophilic leukemia cells independently of the type 1 Fc epsilon receptor.</title>
        <authorList>
            <person name="Halova I."/>
            <person name="Draberova L."/>
            <person name="Draber P."/>
        </authorList>
    </citation>
    <scope>NUCLEOTIDE SEQUENCE [MRNA]</scope>
    <scope>PROTEIN SEQUENCE OF 26-44</scope>
    <scope>FUNCTION</scope>
    <scope>GLYCOSYLATION</scope>
    <scope>SUBCELLULAR LOCATION</scope>
    <scope>TISSUE SPECIFICITY</scope>
    <source>
        <strain>Wistar</strain>
        <tissue>Leukemia</tissue>
    </source>
</reference>
<evidence type="ECO:0000250" key="1">
    <source>
        <dbReference type="UniProtKB" id="Q9BY14"/>
    </source>
</evidence>
<evidence type="ECO:0000250" key="2">
    <source>
        <dbReference type="UniProtKB" id="Q9JMI7"/>
    </source>
</evidence>
<evidence type="ECO:0000255" key="3"/>
<evidence type="ECO:0000269" key="4">
    <source>
    </source>
</evidence>
<evidence type="ECO:0000312" key="5">
    <source>
        <dbReference type="RGD" id="621373"/>
    </source>
</evidence>
<protein>
    <recommendedName>
        <fullName evidence="1">Testis-expressed protein 101</fullName>
    </recommendedName>
    <alternativeName>
        <fullName>Lipid raft-associated glycoprotein TEC-21</fullName>
    </alternativeName>
</protein>
<gene>
    <name evidence="5" type="primary">Tex101</name>
</gene>
<proteinExistence type="evidence at protein level"/>
<keyword id="KW-1003">Cell membrane</keyword>
<keyword id="KW-0968">Cytoplasmic vesicle</keyword>
<keyword id="KW-0903">Direct protein sequencing</keyword>
<keyword id="KW-0325">Glycoprotein</keyword>
<keyword id="KW-0336">GPI-anchor</keyword>
<keyword id="KW-0449">Lipoprotein</keyword>
<keyword id="KW-0472">Membrane</keyword>
<keyword id="KW-1185">Reference proteome</keyword>
<keyword id="KW-0964">Secreted</keyword>
<keyword id="KW-0732">Signal</keyword>
<feature type="signal peptide" evidence="4">
    <location>
        <begin position="1"/>
        <end position="25"/>
    </location>
</feature>
<feature type="chain" id="PRO_0000247625" description="Testis-expressed protein 101">
    <location>
        <begin position="26"/>
        <end position="224"/>
    </location>
</feature>
<feature type="propeptide" id="PRO_0000247626" description="Removed in mature form" evidence="3">
    <location>
        <begin position="225"/>
        <end position="250"/>
    </location>
</feature>
<feature type="domain" description="UPAR/Ly6">
    <location>
        <begin position="141"/>
        <end position="215"/>
    </location>
</feature>
<feature type="lipid moiety-binding region" description="GPI-anchor amidated glycine" evidence="3">
    <location>
        <position position="224"/>
    </location>
</feature>
<feature type="glycosylation site" description="N-linked (GlcNAc...) asparagine" evidence="3">
    <location>
        <position position="45"/>
    </location>
</feature>
<feature type="glycosylation site" description="N-linked (GlcNAc...) asparagine" evidence="3">
    <location>
        <position position="110"/>
    </location>
</feature>
<feature type="glycosylation site" description="N-linked (GlcNAc...) asparagine" evidence="3">
    <location>
        <position position="134"/>
    </location>
</feature>
<feature type="glycosylation site" description="N-linked (GlcNAc...) asparagine" evidence="3">
    <location>
        <position position="160"/>
    </location>
</feature>
<name>TX101_RAT</name>